<protein>
    <recommendedName>
        <fullName evidence="1">Small ribosomal subunit protein uS4</fullName>
    </recommendedName>
    <alternativeName>
        <fullName evidence="2">30S ribosomal protein S4</fullName>
    </alternativeName>
</protein>
<name>RS4_OLEA2</name>
<dbReference type="EMBL" id="CP000112">
    <property type="protein sequence ID" value="ABB39029.1"/>
    <property type="molecule type" value="Genomic_DNA"/>
</dbReference>
<dbReference type="RefSeq" id="WP_011368120.1">
    <property type="nucleotide sequence ID" value="NC_007519.1"/>
</dbReference>
<dbReference type="SMR" id="Q30Z67"/>
<dbReference type="STRING" id="207559.Dde_2232"/>
<dbReference type="KEGG" id="dde:Dde_2232"/>
<dbReference type="eggNOG" id="COG0522">
    <property type="taxonomic scope" value="Bacteria"/>
</dbReference>
<dbReference type="HOGENOM" id="CLU_092403_0_2_7"/>
<dbReference type="Proteomes" id="UP000002710">
    <property type="component" value="Chromosome"/>
</dbReference>
<dbReference type="GO" id="GO:0015935">
    <property type="term" value="C:small ribosomal subunit"/>
    <property type="evidence" value="ECO:0007669"/>
    <property type="project" value="InterPro"/>
</dbReference>
<dbReference type="GO" id="GO:0019843">
    <property type="term" value="F:rRNA binding"/>
    <property type="evidence" value="ECO:0007669"/>
    <property type="project" value="UniProtKB-UniRule"/>
</dbReference>
<dbReference type="GO" id="GO:0003735">
    <property type="term" value="F:structural constituent of ribosome"/>
    <property type="evidence" value="ECO:0007669"/>
    <property type="project" value="InterPro"/>
</dbReference>
<dbReference type="GO" id="GO:0042274">
    <property type="term" value="P:ribosomal small subunit biogenesis"/>
    <property type="evidence" value="ECO:0007669"/>
    <property type="project" value="TreeGrafter"/>
</dbReference>
<dbReference type="GO" id="GO:0006412">
    <property type="term" value="P:translation"/>
    <property type="evidence" value="ECO:0007669"/>
    <property type="project" value="UniProtKB-UniRule"/>
</dbReference>
<dbReference type="CDD" id="cd00165">
    <property type="entry name" value="S4"/>
    <property type="match status" value="1"/>
</dbReference>
<dbReference type="FunFam" id="1.10.1050.10:FF:000001">
    <property type="entry name" value="30S ribosomal protein S4"/>
    <property type="match status" value="1"/>
</dbReference>
<dbReference type="FunFam" id="3.10.290.10:FF:000001">
    <property type="entry name" value="30S ribosomal protein S4"/>
    <property type="match status" value="1"/>
</dbReference>
<dbReference type="Gene3D" id="1.10.1050.10">
    <property type="entry name" value="Ribosomal Protein S4 Delta 41, Chain A, domain 1"/>
    <property type="match status" value="1"/>
</dbReference>
<dbReference type="Gene3D" id="3.10.290.10">
    <property type="entry name" value="RNA-binding S4 domain"/>
    <property type="match status" value="1"/>
</dbReference>
<dbReference type="HAMAP" id="MF_01306_B">
    <property type="entry name" value="Ribosomal_uS4_B"/>
    <property type="match status" value="1"/>
</dbReference>
<dbReference type="InterPro" id="IPR022801">
    <property type="entry name" value="Ribosomal_uS4"/>
</dbReference>
<dbReference type="InterPro" id="IPR005709">
    <property type="entry name" value="Ribosomal_uS4_bac-type"/>
</dbReference>
<dbReference type="InterPro" id="IPR018079">
    <property type="entry name" value="Ribosomal_uS4_CS"/>
</dbReference>
<dbReference type="InterPro" id="IPR001912">
    <property type="entry name" value="Ribosomal_uS4_N"/>
</dbReference>
<dbReference type="InterPro" id="IPR002942">
    <property type="entry name" value="S4_RNA-bd"/>
</dbReference>
<dbReference type="InterPro" id="IPR036986">
    <property type="entry name" value="S4_RNA-bd_sf"/>
</dbReference>
<dbReference type="NCBIfam" id="NF003717">
    <property type="entry name" value="PRK05327.1"/>
    <property type="match status" value="1"/>
</dbReference>
<dbReference type="NCBIfam" id="TIGR01017">
    <property type="entry name" value="rpsD_bact"/>
    <property type="match status" value="1"/>
</dbReference>
<dbReference type="PANTHER" id="PTHR11831">
    <property type="entry name" value="30S 40S RIBOSOMAL PROTEIN"/>
    <property type="match status" value="1"/>
</dbReference>
<dbReference type="PANTHER" id="PTHR11831:SF4">
    <property type="entry name" value="SMALL RIBOSOMAL SUBUNIT PROTEIN US4M"/>
    <property type="match status" value="1"/>
</dbReference>
<dbReference type="Pfam" id="PF00163">
    <property type="entry name" value="Ribosomal_S4"/>
    <property type="match status" value="1"/>
</dbReference>
<dbReference type="Pfam" id="PF01479">
    <property type="entry name" value="S4"/>
    <property type="match status" value="1"/>
</dbReference>
<dbReference type="SMART" id="SM01390">
    <property type="entry name" value="Ribosomal_S4"/>
    <property type="match status" value="1"/>
</dbReference>
<dbReference type="SMART" id="SM00363">
    <property type="entry name" value="S4"/>
    <property type="match status" value="1"/>
</dbReference>
<dbReference type="SUPFAM" id="SSF55174">
    <property type="entry name" value="Alpha-L RNA-binding motif"/>
    <property type="match status" value="1"/>
</dbReference>
<dbReference type="PROSITE" id="PS00632">
    <property type="entry name" value="RIBOSOMAL_S4"/>
    <property type="match status" value="1"/>
</dbReference>
<dbReference type="PROSITE" id="PS50889">
    <property type="entry name" value="S4"/>
    <property type="match status" value="1"/>
</dbReference>
<proteinExistence type="inferred from homology"/>
<evidence type="ECO:0000255" key="1">
    <source>
        <dbReference type="HAMAP-Rule" id="MF_01306"/>
    </source>
</evidence>
<evidence type="ECO:0000305" key="2"/>
<organism>
    <name type="scientific">Oleidesulfovibrio alaskensis (strain ATCC BAA-1058 / DSM 17464 / G20)</name>
    <name type="common">Desulfovibrio alaskensis</name>
    <dbReference type="NCBI Taxonomy" id="207559"/>
    <lineage>
        <taxon>Bacteria</taxon>
        <taxon>Pseudomonadati</taxon>
        <taxon>Thermodesulfobacteriota</taxon>
        <taxon>Desulfovibrionia</taxon>
        <taxon>Desulfovibrionales</taxon>
        <taxon>Desulfovibrionaceae</taxon>
        <taxon>Oleidesulfovibrio</taxon>
    </lineage>
</organism>
<comment type="function">
    <text evidence="1">One of the primary rRNA binding proteins, it binds directly to 16S rRNA where it nucleates assembly of the body of the 30S subunit.</text>
</comment>
<comment type="function">
    <text evidence="1">With S5 and S12 plays an important role in translational accuracy.</text>
</comment>
<comment type="subunit">
    <text evidence="1">Part of the 30S ribosomal subunit. Contacts protein S5. The interaction surface between S4 and S5 is involved in control of translational fidelity.</text>
</comment>
<comment type="similarity">
    <text evidence="1">Belongs to the universal ribosomal protein uS4 family.</text>
</comment>
<feature type="chain" id="PRO_0000228894" description="Small ribosomal subunit protein uS4">
    <location>
        <begin position="1"/>
        <end position="208"/>
    </location>
</feature>
<feature type="domain" description="S4 RNA-binding" evidence="1">
    <location>
        <begin position="98"/>
        <end position="161"/>
    </location>
</feature>
<keyword id="KW-1185">Reference proteome</keyword>
<keyword id="KW-0687">Ribonucleoprotein</keyword>
<keyword id="KW-0689">Ribosomal protein</keyword>
<keyword id="KW-0694">RNA-binding</keyword>
<keyword id="KW-0699">rRNA-binding</keyword>
<sequence length="208" mass="23972">MAKYNDSKCRICRREGGKLFLKGDRCYTDKCAFDRRPYAPGQHGRARKKNSDYAVQLREKQKVRRMYGLLEKQFHSYFVKADMSKGVTGSNLLSILERRLDNVIYRLGFANSRSQARQMVRHGIFTVNGRKATIPSIQVKVGDVIEVREKNRKMPVIAEAQEVIARRGCPSWLEADGPNFRGVVKALPQREDIQFPMSEQLIVELYSK</sequence>
<gene>
    <name evidence="1" type="primary">rpsD</name>
    <name type="ordered locus">Dde_2232</name>
</gene>
<reference key="1">
    <citation type="journal article" date="2011" name="J. Bacteriol.">
        <title>Complete genome sequence and updated annotation of Desulfovibrio alaskensis G20.</title>
        <authorList>
            <person name="Hauser L.J."/>
            <person name="Land M.L."/>
            <person name="Brown S.D."/>
            <person name="Larimer F."/>
            <person name="Keller K.L."/>
            <person name="Rapp-Giles B.J."/>
            <person name="Price M.N."/>
            <person name="Lin M."/>
            <person name="Bruce D.C."/>
            <person name="Detter J.C."/>
            <person name="Tapia R."/>
            <person name="Han C.S."/>
            <person name="Goodwin L.A."/>
            <person name="Cheng J.F."/>
            <person name="Pitluck S."/>
            <person name="Copeland A."/>
            <person name="Lucas S."/>
            <person name="Nolan M."/>
            <person name="Lapidus A.L."/>
            <person name="Palumbo A.V."/>
            <person name="Wall J.D."/>
        </authorList>
    </citation>
    <scope>NUCLEOTIDE SEQUENCE [LARGE SCALE GENOMIC DNA]</scope>
    <source>
        <strain>ATCC BAA-1058 / DSM 17464 / G20</strain>
    </source>
</reference>
<accession>Q30Z67</accession>